<sequence length="819" mass="94678">MKEYKPQEIESKWQGVWSEKKVFETPQYSDKKKYYALVMFPYPSGTLHVGHVKNYVIGDIVARYKRMQGYNVLHPFGYDAFGLPAENAAIAHKIHPKKWTLDNINVIRGQIKKIGISYDWNREVITCTEDYYKWTQWVFLKLYEAGLAYKKPGAVNWCPSCQTVLANEQVKDGKCERCGTTVTMKYLEQWYFKITDYAEKLLEGLDRLPGWPEHVKTMQRNWIGKSTGAEVDFPVDGMDRKIRIFTTRPDTIYGVTFMAIAPESPLVMELVTEDKKKEVEEFLAKVALEDRFKRTSVEAKKEGVFLGRYAINPLTNEKIPIYVANYILYEYGTGAIMAVPAHDQRDYDFAKTYNLPIKQVIKPKDGEWNINERPYEEEGIMINSGPFDGLESSKGIEEVTKYIEEKGFGKKSVQYKLRDWLISRQRYWGAPIPIVYCEKCGIVPVPEKDLPVRLPENVEFLPTGQSPLTLSEEFKHTTCPKCGGPAHREVETMDTFVDSSWYFLRYVNPKLDDKPFESDDVNYWLPVDQYIGGVEHAVLHLLYSRFITKVLHDLGYLKFDEPFENLFTQGMIYKDGWKMSKSKGNVVSPDDMINKYGADTLRMYILFMAPPEKDAEWNDAGIDGVNRFIKRLWNNYYKILDIINSNDTKNENEFGKEEKNLRRKLHAMIKKIKEDIEGGFKFNTAIAGLMEFNNQLSDYLENTKSPNKKLLREIAEKVVLILSPFAPHMAEEMWHDLGKETLIVEEKWPEYDPEALKEDELTIVVQVNGKVRGKITVPADASEEEIKNRAVENAGKFLEGKTIVNTIYVKGKLVNIVIK</sequence>
<dbReference type="EC" id="6.1.1.4" evidence="1"/>
<dbReference type="EMBL" id="CP000771">
    <property type="protein sequence ID" value="ABS61365.1"/>
    <property type="molecule type" value="Genomic_DNA"/>
</dbReference>
<dbReference type="RefSeq" id="WP_011994670.1">
    <property type="nucleotide sequence ID" value="NC_009718.1"/>
</dbReference>
<dbReference type="SMR" id="A7HN82"/>
<dbReference type="STRING" id="381764.Fnod_1522"/>
<dbReference type="KEGG" id="fno:Fnod_1522"/>
<dbReference type="eggNOG" id="COG0495">
    <property type="taxonomic scope" value="Bacteria"/>
</dbReference>
<dbReference type="HOGENOM" id="CLU_004427_0_0_0"/>
<dbReference type="OrthoDB" id="9810365at2"/>
<dbReference type="Proteomes" id="UP000002415">
    <property type="component" value="Chromosome"/>
</dbReference>
<dbReference type="GO" id="GO:0005829">
    <property type="term" value="C:cytosol"/>
    <property type="evidence" value="ECO:0007669"/>
    <property type="project" value="TreeGrafter"/>
</dbReference>
<dbReference type="GO" id="GO:0002161">
    <property type="term" value="F:aminoacyl-tRNA deacylase activity"/>
    <property type="evidence" value="ECO:0007669"/>
    <property type="project" value="InterPro"/>
</dbReference>
<dbReference type="GO" id="GO:0005524">
    <property type="term" value="F:ATP binding"/>
    <property type="evidence" value="ECO:0007669"/>
    <property type="project" value="UniProtKB-UniRule"/>
</dbReference>
<dbReference type="GO" id="GO:0004823">
    <property type="term" value="F:leucine-tRNA ligase activity"/>
    <property type="evidence" value="ECO:0007669"/>
    <property type="project" value="UniProtKB-UniRule"/>
</dbReference>
<dbReference type="GO" id="GO:0006429">
    <property type="term" value="P:leucyl-tRNA aminoacylation"/>
    <property type="evidence" value="ECO:0007669"/>
    <property type="project" value="UniProtKB-UniRule"/>
</dbReference>
<dbReference type="CDD" id="cd07958">
    <property type="entry name" value="Anticodon_Ia_Leu_BEm"/>
    <property type="match status" value="1"/>
</dbReference>
<dbReference type="CDD" id="cd00812">
    <property type="entry name" value="LeuRS_core"/>
    <property type="match status" value="1"/>
</dbReference>
<dbReference type="FunFam" id="3.10.20.590:FF:000001">
    <property type="entry name" value="Leucine--tRNA ligase"/>
    <property type="match status" value="1"/>
</dbReference>
<dbReference type="FunFam" id="3.40.50.620:FF:000003">
    <property type="entry name" value="Leucine--tRNA ligase"/>
    <property type="match status" value="1"/>
</dbReference>
<dbReference type="FunFam" id="3.40.50.620:FF:000212">
    <property type="entry name" value="Leucine--tRNA ligase"/>
    <property type="match status" value="1"/>
</dbReference>
<dbReference type="FunFam" id="1.10.730.10:FF:000011">
    <property type="entry name" value="Leucine--tRNA ligase chloroplastic/mitochondrial"/>
    <property type="match status" value="1"/>
</dbReference>
<dbReference type="Gene3D" id="3.10.20.590">
    <property type="match status" value="1"/>
</dbReference>
<dbReference type="Gene3D" id="3.40.50.620">
    <property type="entry name" value="HUPs"/>
    <property type="match status" value="2"/>
</dbReference>
<dbReference type="Gene3D" id="1.10.730.10">
    <property type="entry name" value="Isoleucyl-tRNA Synthetase, Domain 1"/>
    <property type="match status" value="2"/>
</dbReference>
<dbReference type="HAMAP" id="MF_00049_B">
    <property type="entry name" value="Leu_tRNA_synth_B"/>
    <property type="match status" value="1"/>
</dbReference>
<dbReference type="InterPro" id="IPR001412">
    <property type="entry name" value="aa-tRNA-synth_I_CS"/>
</dbReference>
<dbReference type="InterPro" id="IPR002300">
    <property type="entry name" value="aa-tRNA-synth_Ia"/>
</dbReference>
<dbReference type="InterPro" id="IPR002302">
    <property type="entry name" value="Leu-tRNA-ligase"/>
</dbReference>
<dbReference type="InterPro" id="IPR025709">
    <property type="entry name" value="Leu_tRNA-synth_edit"/>
</dbReference>
<dbReference type="InterPro" id="IPR013155">
    <property type="entry name" value="M/V/L/I-tRNA-synth_anticd-bd"/>
</dbReference>
<dbReference type="InterPro" id="IPR015413">
    <property type="entry name" value="Methionyl/Leucyl_tRNA_Synth"/>
</dbReference>
<dbReference type="InterPro" id="IPR014729">
    <property type="entry name" value="Rossmann-like_a/b/a_fold"/>
</dbReference>
<dbReference type="InterPro" id="IPR009080">
    <property type="entry name" value="tRNAsynth_Ia_anticodon-bd"/>
</dbReference>
<dbReference type="InterPro" id="IPR009008">
    <property type="entry name" value="Val/Leu/Ile-tRNA-synth_edit"/>
</dbReference>
<dbReference type="NCBIfam" id="TIGR00396">
    <property type="entry name" value="leuS_bact"/>
    <property type="match status" value="1"/>
</dbReference>
<dbReference type="PANTHER" id="PTHR43740:SF2">
    <property type="entry name" value="LEUCINE--TRNA LIGASE, MITOCHONDRIAL"/>
    <property type="match status" value="1"/>
</dbReference>
<dbReference type="PANTHER" id="PTHR43740">
    <property type="entry name" value="LEUCYL-TRNA SYNTHETASE"/>
    <property type="match status" value="1"/>
</dbReference>
<dbReference type="Pfam" id="PF08264">
    <property type="entry name" value="Anticodon_1"/>
    <property type="match status" value="1"/>
</dbReference>
<dbReference type="Pfam" id="PF00133">
    <property type="entry name" value="tRNA-synt_1"/>
    <property type="match status" value="1"/>
</dbReference>
<dbReference type="Pfam" id="PF13603">
    <property type="entry name" value="tRNA-synt_1_2"/>
    <property type="match status" value="1"/>
</dbReference>
<dbReference type="Pfam" id="PF09334">
    <property type="entry name" value="tRNA-synt_1g"/>
    <property type="match status" value="1"/>
</dbReference>
<dbReference type="PRINTS" id="PR00985">
    <property type="entry name" value="TRNASYNTHLEU"/>
</dbReference>
<dbReference type="SUPFAM" id="SSF47323">
    <property type="entry name" value="Anticodon-binding domain of a subclass of class I aminoacyl-tRNA synthetases"/>
    <property type="match status" value="1"/>
</dbReference>
<dbReference type="SUPFAM" id="SSF52374">
    <property type="entry name" value="Nucleotidylyl transferase"/>
    <property type="match status" value="1"/>
</dbReference>
<dbReference type="SUPFAM" id="SSF50677">
    <property type="entry name" value="ValRS/IleRS/LeuRS editing domain"/>
    <property type="match status" value="1"/>
</dbReference>
<dbReference type="PROSITE" id="PS00178">
    <property type="entry name" value="AA_TRNA_LIGASE_I"/>
    <property type="match status" value="1"/>
</dbReference>
<gene>
    <name evidence="1" type="primary">leuS</name>
    <name type="ordered locus">Fnod_1522</name>
</gene>
<organism>
    <name type="scientific">Fervidobacterium nodosum (strain ATCC 35602 / DSM 5306 / Rt17-B1)</name>
    <dbReference type="NCBI Taxonomy" id="381764"/>
    <lineage>
        <taxon>Bacteria</taxon>
        <taxon>Thermotogati</taxon>
        <taxon>Thermotogota</taxon>
        <taxon>Thermotogae</taxon>
        <taxon>Thermotogales</taxon>
        <taxon>Fervidobacteriaceae</taxon>
        <taxon>Fervidobacterium</taxon>
    </lineage>
</organism>
<comment type="catalytic activity">
    <reaction evidence="1">
        <text>tRNA(Leu) + L-leucine + ATP = L-leucyl-tRNA(Leu) + AMP + diphosphate</text>
        <dbReference type="Rhea" id="RHEA:11688"/>
        <dbReference type="Rhea" id="RHEA-COMP:9613"/>
        <dbReference type="Rhea" id="RHEA-COMP:9622"/>
        <dbReference type="ChEBI" id="CHEBI:30616"/>
        <dbReference type="ChEBI" id="CHEBI:33019"/>
        <dbReference type="ChEBI" id="CHEBI:57427"/>
        <dbReference type="ChEBI" id="CHEBI:78442"/>
        <dbReference type="ChEBI" id="CHEBI:78494"/>
        <dbReference type="ChEBI" id="CHEBI:456215"/>
        <dbReference type="EC" id="6.1.1.4"/>
    </reaction>
</comment>
<comment type="subcellular location">
    <subcellularLocation>
        <location evidence="1">Cytoplasm</location>
    </subcellularLocation>
</comment>
<comment type="similarity">
    <text evidence="1">Belongs to the class-I aminoacyl-tRNA synthetase family.</text>
</comment>
<name>SYL_FERNB</name>
<protein>
    <recommendedName>
        <fullName evidence="1">Leucine--tRNA ligase</fullName>
        <ecNumber evidence="1">6.1.1.4</ecNumber>
    </recommendedName>
    <alternativeName>
        <fullName evidence="1">Leucyl-tRNA synthetase</fullName>
        <shortName evidence="1">LeuRS</shortName>
    </alternativeName>
</protein>
<evidence type="ECO:0000255" key="1">
    <source>
        <dbReference type="HAMAP-Rule" id="MF_00049"/>
    </source>
</evidence>
<proteinExistence type="inferred from homology"/>
<accession>A7HN82</accession>
<feature type="chain" id="PRO_1000071110" description="Leucine--tRNA ligase">
    <location>
        <begin position="1"/>
        <end position="819"/>
    </location>
</feature>
<feature type="short sequence motif" description="'HIGH' region">
    <location>
        <begin position="41"/>
        <end position="51"/>
    </location>
</feature>
<feature type="short sequence motif" description="'KMSKS' region">
    <location>
        <begin position="578"/>
        <end position="582"/>
    </location>
</feature>
<feature type="binding site" evidence="1">
    <location>
        <position position="581"/>
    </location>
    <ligand>
        <name>ATP</name>
        <dbReference type="ChEBI" id="CHEBI:30616"/>
    </ligand>
</feature>
<keyword id="KW-0030">Aminoacyl-tRNA synthetase</keyword>
<keyword id="KW-0067">ATP-binding</keyword>
<keyword id="KW-0963">Cytoplasm</keyword>
<keyword id="KW-0436">Ligase</keyword>
<keyword id="KW-0547">Nucleotide-binding</keyword>
<keyword id="KW-0648">Protein biosynthesis</keyword>
<keyword id="KW-1185">Reference proteome</keyword>
<reference key="1">
    <citation type="submission" date="2007-07" db="EMBL/GenBank/DDBJ databases">
        <title>Complete sequence of Fervidobacterium nodosum Rt17-B1.</title>
        <authorList>
            <consortium name="US DOE Joint Genome Institute"/>
            <person name="Copeland A."/>
            <person name="Lucas S."/>
            <person name="Lapidus A."/>
            <person name="Barry K."/>
            <person name="Glavina del Rio T."/>
            <person name="Dalin E."/>
            <person name="Tice H."/>
            <person name="Pitluck S."/>
            <person name="Saunders E."/>
            <person name="Brettin T."/>
            <person name="Bruce D."/>
            <person name="Detter J.C."/>
            <person name="Han C."/>
            <person name="Schmutz J."/>
            <person name="Larimer F."/>
            <person name="Land M."/>
            <person name="Hauser L."/>
            <person name="Kyrpides N."/>
            <person name="Mikhailova N."/>
            <person name="Nelson K."/>
            <person name="Gogarten J.P."/>
            <person name="Noll K."/>
            <person name="Richardson P."/>
        </authorList>
    </citation>
    <scope>NUCLEOTIDE SEQUENCE [LARGE SCALE GENOMIC DNA]</scope>
    <source>
        <strain>ATCC 35602 / DSM 5306 / Rt17-B1</strain>
    </source>
</reference>